<dbReference type="EMBL" id="AK013425">
    <property type="protein sequence ID" value="BAB28850.1"/>
    <property type="molecule type" value="mRNA"/>
</dbReference>
<dbReference type="CCDS" id="CCDS20030.1"/>
<dbReference type="RefSeq" id="NP_082634.1">
    <property type="nucleotide sequence ID" value="NM_028358.2"/>
</dbReference>
<dbReference type="RefSeq" id="NP_997633.1">
    <property type="nucleotide sequence ID" value="NM_212468.3"/>
</dbReference>
<dbReference type="RefSeq" id="XP_006506392.1">
    <property type="nucleotide sequence ID" value="XM_006506329.3"/>
</dbReference>
<dbReference type="RefSeq" id="XP_017177153.1">
    <property type="nucleotide sequence ID" value="XM_017321664.3"/>
</dbReference>
<dbReference type="SMR" id="Q9CYR0"/>
<dbReference type="BioGRID" id="238075">
    <property type="interactions" value="26"/>
</dbReference>
<dbReference type="FunCoup" id="Q9CYR0">
    <property type="interactions" value="2503"/>
</dbReference>
<dbReference type="IntAct" id="Q9CYR0">
    <property type="interactions" value="4"/>
</dbReference>
<dbReference type="MINT" id="Q9CYR0"/>
<dbReference type="STRING" id="10090.ENSMUSP00000031971"/>
<dbReference type="GlyGen" id="Q9CYR0">
    <property type="glycosylation" value="1 site, 1 O-linked glycan (1 site)"/>
</dbReference>
<dbReference type="iPTMnet" id="Q9CYR0"/>
<dbReference type="PhosphoSitePlus" id="Q9CYR0"/>
<dbReference type="SwissPalm" id="Q9CYR0"/>
<dbReference type="jPOST" id="Q9CYR0"/>
<dbReference type="PaxDb" id="10090-ENSMUSP00000031971"/>
<dbReference type="PeptideAtlas" id="Q9CYR0"/>
<dbReference type="ProteomicsDB" id="263350"/>
<dbReference type="Pumba" id="Q9CYR0"/>
<dbReference type="Antibodypedia" id="1260">
    <property type="antibodies" value="179 antibodies from 31 providers"/>
</dbReference>
<dbReference type="Ensembl" id="ENSMUST00000031971.13">
    <property type="protein sequence ID" value="ENSMUSP00000031971.7"/>
    <property type="gene ID" value="ENSMUSG00000029911.15"/>
</dbReference>
<dbReference type="GeneID" id="381760"/>
<dbReference type="KEGG" id="mmu:381760"/>
<dbReference type="UCSC" id="uc009bmr.1">
    <property type="organism name" value="mouse"/>
</dbReference>
<dbReference type="AGR" id="MGI:1920040"/>
<dbReference type="CTD" id="6742"/>
<dbReference type="MGI" id="MGI:1920040">
    <property type="gene designation" value="Ssbp1"/>
</dbReference>
<dbReference type="VEuPathDB" id="HostDB:ENSMUSG00000029911"/>
<dbReference type="eggNOG" id="KOG1653">
    <property type="taxonomic scope" value="Eukaryota"/>
</dbReference>
<dbReference type="GeneTree" id="ENSGT00390000002796"/>
<dbReference type="InParanoid" id="Q9CYR0"/>
<dbReference type="OrthoDB" id="1078367at2759"/>
<dbReference type="PhylomeDB" id="Q9CYR0"/>
<dbReference type="TreeFam" id="TF314629"/>
<dbReference type="Reactome" id="R-MMU-9837999">
    <property type="pathway name" value="Mitochondrial protein degradation"/>
</dbReference>
<dbReference type="Reactome" id="R-MMU-9913635">
    <property type="pathway name" value="Strand-asynchronous mitochondrial DNA replication"/>
</dbReference>
<dbReference type="BioGRID-ORCS" id="381760">
    <property type="hits" value="24 hits in 77 CRISPR screens"/>
</dbReference>
<dbReference type="CD-CODE" id="CE726F99">
    <property type="entry name" value="Postsynaptic density"/>
</dbReference>
<dbReference type="ChiTaRS" id="Ssbp1">
    <property type="organism name" value="mouse"/>
</dbReference>
<dbReference type="PRO" id="PR:Q9CYR0"/>
<dbReference type="Proteomes" id="UP000000589">
    <property type="component" value="Chromosome 6"/>
</dbReference>
<dbReference type="RNAct" id="Q9CYR0">
    <property type="molecule type" value="protein"/>
</dbReference>
<dbReference type="Bgee" id="ENSMUSG00000029911">
    <property type="expression patterns" value="Expressed in epiblast cell in embryo and 150 other cell types or tissues"/>
</dbReference>
<dbReference type="ExpressionAtlas" id="Q9CYR0">
    <property type="expression patterns" value="baseline and differential"/>
</dbReference>
<dbReference type="GO" id="GO:0042645">
    <property type="term" value="C:mitochondrial nucleoid"/>
    <property type="evidence" value="ECO:0000250"/>
    <property type="project" value="UniProtKB"/>
</dbReference>
<dbReference type="GO" id="GO:0005739">
    <property type="term" value="C:mitochondrion"/>
    <property type="evidence" value="ECO:0000314"/>
    <property type="project" value="MGI"/>
</dbReference>
<dbReference type="GO" id="GO:0003682">
    <property type="term" value="F:chromatin binding"/>
    <property type="evidence" value="ECO:0000250"/>
    <property type="project" value="UniProtKB"/>
</dbReference>
<dbReference type="GO" id="GO:0003697">
    <property type="term" value="F:single-stranded DNA binding"/>
    <property type="evidence" value="ECO:0000250"/>
    <property type="project" value="UniProtKB"/>
</dbReference>
<dbReference type="GO" id="GO:0006260">
    <property type="term" value="P:DNA replication"/>
    <property type="evidence" value="ECO:0007669"/>
    <property type="project" value="UniProtKB-KW"/>
</dbReference>
<dbReference type="GO" id="GO:0007005">
    <property type="term" value="P:mitochondrion organization"/>
    <property type="evidence" value="ECO:0000315"/>
    <property type="project" value="MGI"/>
</dbReference>
<dbReference type="GO" id="GO:0090297">
    <property type="term" value="P:positive regulation of mitochondrial DNA replication"/>
    <property type="evidence" value="ECO:0000250"/>
    <property type="project" value="UniProtKB"/>
</dbReference>
<dbReference type="GO" id="GO:0051289">
    <property type="term" value="P:protein homotetramerization"/>
    <property type="evidence" value="ECO:0000250"/>
    <property type="project" value="UniProtKB"/>
</dbReference>
<dbReference type="CDD" id="cd04496">
    <property type="entry name" value="SSB_OBF"/>
    <property type="match status" value="1"/>
</dbReference>
<dbReference type="FunFam" id="2.40.50.140:FF:000129">
    <property type="entry name" value="Single-stranded DNA-binding protein 1, mitochondrial"/>
    <property type="match status" value="1"/>
</dbReference>
<dbReference type="Gene3D" id="2.40.50.140">
    <property type="entry name" value="Nucleic acid-binding proteins"/>
    <property type="match status" value="1"/>
</dbReference>
<dbReference type="HAMAP" id="MF_00984">
    <property type="entry name" value="SSB"/>
    <property type="match status" value="1"/>
</dbReference>
<dbReference type="InterPro" id="IPR012340">
    <property type="entry name" value="NA-bd_OB-fold"/>
</dbReference>
<dbReference type="InterPro" id="IPR000424">
    <property type="entry name" value="Primosome_PriB/ssb"/>
</dbReference>
<dbReference type="InterPro" id="IPR011344">
    <property type="entry name" value="ssDNA-bd"/>
</dbReference>
<dbReference type="NCBIfam" id="TIGR00621">
    <property type="entry name" value="ssb"/>
    <property type="match status" value="1"/>
</dbReference>
<dbReference type="PANTHER" id="PTHR10302">
    <property type="entry name" value="SINGLE-STRANDED DNA-BINDING PROTEIN"/>
    <property type="match status" value="1"/>
</dbReference>
<dbReference type="PANTHER" id="PTHR10302:SF0">
    <property type="entry name" value="SINGLE-STRANDED DNA-BINDING PROTEIN, MITOCHONDRIAL"/>
    <property type="match status" value="1"/>
</dbReference>
<dbReference type="Pfam" id="PF00436">
    <property type="entry name" value="SSB"/>
    <property type="match status" value="1"/>
</dbReference>
<dbReference type="PIRSF" id="PIRSF002070">
    <property type="entry name" value="SSB"/>
    <property type="match status" value="1"/>
</dbReference>
<dbReference type="SUPFAM" id="SSF50249">
    <property type="entry name" value="Nucleic acid-binding proteins"/>
    <property type="match status" value="1"/>
</dbReference>
<dbReference type="PROSITE" id="PS50935">
    <property type="entry name" value="SSB"/>
    <property type="match status" value="1"/>
</dbReference>
<protein>
    <recommendedName>
        <fullName>Single-stranded DNA-binding protein, mitochondrial</fullName>
        <shortName>Mt-SSB</shortName>
        <shortName>MtSSB</shortName>
    </recommendedName>
</protein>
<evidence type="ECO:0000250" key="1">
    <source>
        <dbReference type="UniProtKB" id="Q04837"/>
    </source>
</evidence>
<evidence type="ECO:0000269" key="2">
    <source>
    </source>
</evidence>
<evidence type="ECO:0007744" key="3">
    <source>
    </source>
</evidence>
<evidence type="ECO:0007744" key="4">
    <source>
    </source>
</evidence>
<sequence>MFRRPVLQVFRQFVRHESEVASSLVLERSLNRVQLLGRVGQDPVMRQVEGKNPVTIFSLATNEMWRSGDSEVYQMGDVSQKTTWHRISVFRPGLRDVAYQYVKKGARIFVEGKVDYGEYMDKNNVRRQATTIIAGKKLVVHSVSGCSLEGLA</sequence>
<name>SSBP_MOUSE</name>
<gene>
    <name type="primary">Ssbp1</name>
</gene>
<proteinExistence type="evidence at protein level"/>
<accession>Q9CYR0</accession>
<organism>
    <name type="scientific">Mus musculus</name>
    <name type="common">Mouse</name>
    <dbReference type="NCBI Taxonomy" id="10090"/>
    <lineage>
        <taxon>Eukaryota</taxon>
        <taxon>Metazoa</taxon>
        <taxon>Chordata</taxon>
        <taxon>Craniata</taxon>
        <taxon>Vertebrata</taxon>
        <taxon>Euteleostomi</taxon>
        <taxon>Mammalia</taxon>
        <taxon>Eutheria</taxon>
        <taxon>Euarchontoglires</taxon>
        <taxon>Glires</taxon>
        <taxon>Rodentia</taxon>
        <taxon>Myomorpha</taxon>
        <taxon>Muroidea</taxon>
        <taxon>Muridae</taxon>
        <taxon>Murinae</taxon>
        <taxon>Mus</taxon>
        <taxon>Mus</taxon>
    </lineage>
</organism>
<reference key="1">
    <citation type="journal article" date="2005" name="Science">
        <title>The transcriptional landscape of the mammalian genome.</title>
        <authorList>
            <person name="Carninci P."/>
            <person name="Kasukawa T."/>
            <person name="Katayama S."/>
            <person name="Gough J."/>
            <person name="Frith M.C."/>
            <person name="Maeda N."/>
            <person name="Oyama R."/>
            <person name="Ravasi T."/>
            <person name="Lenhard B."/>
            <person name="Wells C."/>
            <person name="Kodzius R."/>
            <person name="Shimokawa K."/>
            <person name="Bajic V.B."/>
            <person name="Brenner S.E."/>
            <person name="Batalov S."/>
            <person name="Forrest A.R."/>
            <person name="Zavolan M."/>
            <person name="Davis M.J."/>
            <person name="Wilming L.G."/>
            <person name="Aidinis V."/>
            <person name="Allen J.E."/>
            <person name="Ambesi-Impiombato A."/>
            <person name="Apweiler R."/>
            <person name="Aturaliya R.N."/>
            <person name="Bailey T.L."/>
            <person name="Bansal M."/>
            <person name="Baxter L."/>
            <person name="Beisel K.W."/>
            <person name="Bersano T."/>
            <person name="Bono H."/>
            <person name="Chalk A.M."/>
            <person name="Chiu K.P."/>
            <person name="Choudhary V."/>
            <person name="Christoffels A."/>
            <person name="Clutterbuck D.R."/>
            <person name="Crowe M.L."/>
            <person name="Dalla E."/>
            <person name="Dalrymple B.P."/>
            <person name="de Bono B."/>
            <person name="Della Gatta G."/>
            <person name="di Bernardo D."/>
            <person name="Down T."/>
            <person name="Engstrom P."/>
            <person name="Fagiolini M."/>
            <person name="Faulkner G."/>
            <person name="Fletcher C.F."/>
            <person name="Fukushima T."/>
            <person name="Furuno M."/>
            <person name="Futaki S."/>
            <person name="Gariboldi M."/>
            <person name="Georgii-Hemming P."/>
            <person name="Gingeras T.R."/>
            <person name="Gojobori T."/>
            <person name="Green R.E."/>
            <person name="Gustincich S."/>
            <person name="Harbers M."/>
            <person name="Hayashi Y."/>
            <person name="Hensch T.K."/>
            <person name="Hirokawa N."/>
            <person name="Hill D."/>
            <person name="Huminiecki L."/>
            <person name="Iacono M."/>
            <person name="Ikeo K."/>
            <person name="Iwama A."/>
            <person name="Ishikawa T."/>
            <person name="Jakt M."/>
            <person name="Kanapin A."/>
            <person name="Katoh M."/>
            <person name="Kawasawa Y."/>
            <person name="Kelso J."/>
            <person name="Kitamura H."/>
            <person name="Kitano H."/>
            <person name="Kollias G."/>
            <person name="Krishnan S.P."/>
            <person name="Kruger A."/>
            <person name="Kummerfeld S.K."/>
            <person name="Kurochkin I.V."/>
            <person name="Lareau L.F."/>
            <person name="Lazarevic D."/>
            <person name="Lipovich L."/>
            <person name="Liu J."/>
            <person name="Liuni S."/>
            <person name="McWilliam S."/>
            <person name="Madan Babu M."/>
            <person name="Madera M."/>
            <person name="Marchionni L."/>
            <person name="Matsuda H."/>
            <person name="Matsuzawa S."/>
            <person name="Miki H."/>
            <person name="Mignone F."/>
            <person name="Miyake S."/>
            <person name="Morris K."/>
            <person name="Mottagui-Tabar S."/>
            <person name="Mulder N."/>
            <person name="Nakano N."/>
            <person name="Nakauchi H."/>
            <person name="Ng P."/>
            <person name="Nilsson R."/>
            <person name="Nishiguchi S."/>
            <person name="Nishikawa S."/>
            <person name="Nori F."/>
            <person name="Ohara O."/>
            <person name="Okazaki Y."/>
            <person name="Orlando V."/>
            <person name="Pang K.C."/>
            <person name="Pavan W.J."/>
            <person name="Pavesi G."/>
            <person name="Pesole G."/>
            <person name="Petrovsky N."/>
            <person name="Piazza S."/>
            <person name="Reed J."/>
            <person name="Reid J.F."/>
            <person name="Ring B.Z."/>
            <person name="Ringwald M."/>
            <person name="Rost B."/>
            <person name="Ruan Y."/>
            <person name="Salzberg S.L."/>
            <person name="Sandelin A."/>
            <person name="Schneider C."/>
            <person name="Schoenbach C."/>
            <person name="Sekiguchi K."/>
            <person name="Semple C.A."/>
            <person name="Seno S."/>
            <person name="Sessa L."/>
            <person name="Sheng Y."/>
            <person name="Shibata Y."/>
            <person name="Shimada H."/>
            <person name="Shimada K."/>
            <person name="Silva D."/>
            <person name="Sinclair B."/>
            <person name="Sperling S."/>
            <person name="Stupka E."/>
            <person name="Sugiura K."/>
            <person name="Sultana R."/>
            <person name="Takenaka Y."/>
            <person name="Taki K."/>
            <person name="Tammoja K."/>
            <person name="Tan S.L."/>
            <person name="Tang S."/>
            <person name="Taylor M.S."/>
            <person name="Tegner J."/>
            <person name="Teichmann S.A."/>
            <person name="Ueda H.R."/>
            <person name="van Nimwegen E."/>
            <person name="Verardo R."/>
            <person name="Wei C.L."/>
            <person name="Yagi K."/>
            <person name="Yamanishi H."/>
            <person name="Zabarovsky E."/>
            <person name="Zhu S."/>
            <person name="Zimmer A."/>
            <person name="Hide W."/>
            <person name="Bult C."/>
            <person name="Grimmond S.M."/>
            <person name="Teasdale R.D."/>
            <person name="Liu E.T."/>
            <person name="Brusic V."/>
            <person name="Quackenbush J."/>
            <person name="Wahlestedt C."/>
            <person name="Mattick J.S."/>
            <person name="Hume D.A."/>
            <person name="Kai C."/>
            <person name="Sasaki D."/>
            <person name="Tomaru Y."/>
            <person name="Fukuda S."/>
            <person name="Kanamori-Katayama M."/>
            <person name="Suzuki M."/>
            <person name="Aoki J."/>
            <person name="Arakawa T."/>
            <person name="Iida J."/>
            <person name="Imamura K."/>
            <person name="Itoh M."/>
            <person name="Kato T."/>
            <person name="Kawaji H."/>
            <person name="Kawagashira N."/>
            <person name="Kawashima T."/>
            <person name="Kojima M."/>
            <person name="Kondo S."/>
            <person name="Konno H."/>
            <person name="Nakano K."/>
            <person name="Ninomiya N."/>
            <person name="Nishio T."/>
            <person name="Okada M."/>
            <person name="Plessy C."/>
            <person name="Shibata K."/>
            <person name="Shiraki T."/>
            <person name="Suzuki S."/>
            <person name="Tagami M."/>
            <person name="Waki K."/>
            <person name="Watahiki A."/>
            <person name="Okamura-Oho Y."/>
            <person name="Suzuki H."/>
            <person name="Kawai J."/>
            <person name="Hayashizaki Y."/>
        </authorList>
    </citation>
    <scope>NUCLEOTIDE SEQUENCE [LARGE SCALE MRNA]</scope>
    <source>
        <strain>C57BL/6J</strain>
        <tissue>Embryo</tissue>
    </source>
</reference>
<reference key="2">
    <citation type="journal article" date="2010" name="Cell">
        <title>A tissue-specific atlas of mouse protein phosphorylation and expression.</title>
        <authorList>
            <person name="Huttlin E.L."/>
            <person name="Jedrychowski M.P."/>
            <person name="Elias J.E."/>
            <person name="Goswami T."/>
            <person name="Rad R."/>
            <person name="Beausoleil S.A."/>
            <person name="Villen J."/>
            <person name="Haas W."/>
            <person name="Sowa M.E."/>
            <person name="Gygi S.P."/>
        </authorList>
    </citation>
    <scope>PHOSPHORYLATION [LARGE SCALE ANALYSIS] AT SER-67</scope>
    <scope>IDENTIFICATION BY MASS SPECTROMETRY [LARGE SCALE ANALYSIS]</scope>
    <source>
        <tissue>Brain</tissue>
        <tissue>Brown adipose tissue</tissue>
        <tissue>Heart</tissue>
        <tissue>Kidney</tissue>
        <tissue>Liver</tissue>
        <tissue>Lung</tissue>
        <tissue>Pancreas</tissue>
        <tissue>Spleen</tissue>
        <tissue>Testis</tissue>
    </source>
</reference>
<reference key="3">
    <citation type="journal article" date="2013" name="Mol. Cell">
        <title>SIRT5-mediated lysine desuccinylation impacts diverse metabolic pathways.</title>
        <authorList>
            <person name="Park J."/>
            <person name="Chen Y."/>
            <person name="Tishkoff D.X."/>
            <person name="Peng C."/>
            <person name="Tan M."/>
            <person name="Dai L."/>
            <person name="Xie Z."/>
            <person name="Zhang Y."/>
            <person name="Zwaans B.M."/>
            <person name="Skinner M.E."/>
            <person name="Lombard D.B."/>
            <person name="Zhao Y."/>
        </authorList>
    </citation>
    <scope>SUCCINYLATION [LARGE SCALE ANALYSIS] AT LYS-122</scope>
    <scope>IDENTIFICATION BY MASS SPECTROMETRY [LARGE SCALE ANALYSIS]</scope>
    <source>
        <tissue>Liver</tissue>
    </source>
</reference>
<reference key="4">
    <citation type="journal article" date="2019" name="Ann. Neurol.">
        <title>SSBP1 mutations in dominant optic atrophy with variable retinal degeneration.</title>
        <authorList>
            <person name="Jurkute N."/>
            <person name="Leu C."/>
            <person name="Pogoda H.M."/>
            <person name="Arno G."/>
            <person name="Robson A.G."/>
            <person name="Nuernberg G."/>
            <person name="Altmueller J."/>
            <person name="Thiele H."/>
            <person name="Motameny S."/>
            <person name="Toliat M.R."/>
            <person name="Powell K."/>
            <person name="Hoehne W."/>
            <person name="Michaelides M."/>
            <person name="Webster A.R."/>
            <person name="Moore A.T."/>
            <person name="Hammerschmidt M."/>
            <person name="Nuernberg P."/>
            <person name="Yu-Wai-Man P."/>
            <person name="Votruba M."/>
        </authorList>
    </citation>
    <scope>SUBCELLULAR LOCATION</scope>
    <scope>TISSUE SPECIFICITY</scope>
</reference>
<comment type="function">
    <text evidence="1">Binds preferentially and cooperatively to pyrimidine rich single-stranded DNA (ss-DNA). In vitro, required to maintain the copy number of mitochondrial DNA (mtDNA) and plays a crucial role during mtDNA replication by stimulating the activity of the replisome components POLG and TWNK at the replication fork. Promotes the activity of the gamma complex polymerase POLG, largely by organizing the template DNA and eliminating secondary structures to favor ss-DNA conformations that facilitate POLG activity. In addition it is able to promote the 5'-3' unwinding activity of the mtDNA helicase TWNK. May also function in mtDNA repair.</text>
</comment>
<comment type="subunit">
    <text evidence="1">Homotetramer. Interacts with MPG/AAG, through inhibition of its glycosylase activity it potentially prevents formation of DNA breaks in ssDNA, ensuring that base removal primarily occurs in dsDNA. Interacts with POLDIP2. Interacts with PRIMPOL.</text>
</comment>
<comment type="subcellular location">
    <subcellularLocation>
        <location evidence="2">Mitochondrion</location>
    </subcellularLocation>
    <subcellularLocation>
        <location evidence="2">Mitochondrion matrix</location>
        <location evidence="2">Mitochondrion nucleoid</location>
    </subcellularLocation>
</comment>
<comment type="tissue specificity">
    <text evidence="2">Expressed in all the layers of the retina (at protein level).</text>
</comment>
<keyword id="KW-0007">Acetylation</keyword>
<keyword id="KW-0235">DNA replication</keyword>
<keyword id="KW-0238">DNA-binding</keyword>
<keyword id="KW-0496">Mitochondrion</keyword>
<keyword id="KW-1135">Mitochondrion nucleoid</keyword>
<keyword id="KW-0597">Phosphoprotein</keyword>
<keyword id="KW-1185">Reference proteome</keyword>
<keyword id="KW-0809">Transit peptide</keyword>
<feature type="transit peptide" description="Mitochondrion" evidence="1">
    <location>
        <begin position="1"/>
        <end position="16"/>
    </location>
</feature>
<feature type="chain" id="PRO_0000033264" description="Single-stranded DNA-binding protein, mitochondrial">
    <location>
        <begin position="17"/>
        <end position="152"/>
    </location>
</feature>
<feature type="domain" description="SSB">
    <location>
        <begin position="30"/>
        <end position="141"/>
    </location>
</feature>
<feature type="modified residue" description="Phosphoserine" evidence="3">
    <location>
        <position position="67"/>
    </location>
</feature>
<feature type="modified residue" description="Phosphoserine" evidence="1">
    <location>
        <position position="79"/>
    </location>
</feature>
<feature type="modified residue" description="N6-acetyllysine" evidence="1">
    <location>
        <position position="113"/>
    </location>
</feature>
<feature type="modified residue" description="N6-succinyllysine" evidence="4">
    <location>
        <position position="122"/>
    </location>
</feature>